<evidence type="ECO:0000250" key="1"/>
<evidence type="ECO:0000250" key="2">
    <source>
        <dbReference type="UniProtKB" id="Q9EQ06"/>
    </source>
</evidence>
<evidence type="ECO:0000255" key="3"/>
<evidence type="ECO:0000305" key="4"/>
<organism>
    <name type="scientific">Rattus norvegicus</name>
    <name type="common">Rat</name>
    <dbReference type="NCBI Taxonomy" id="10116"/>
    <lineage>
        <taxon>Eukaryota</taxon>
        <taxon>Metazoa</taxon>
        <taxon>Chordata</taxon>
        <taxon>Craniata</taxon>
        <taxon>Vertebrata</taxon>
        <taxon>Euteleostomi</taxon>
        <taxon>Mammalia</taxon>
        <taxon>Eutheria</taxon>
        <taxon>Euarchontoglires</taxon>
        <taxon>Glires</taxon>
        <taxon>Rodentia</taxon>
        <taxon>Myomorpha</taxon>
        <taxon>Muroidea</taxon>
        <taxon>Muridae</taxon>
        <taxon>Murinae</taxon>
        <taxon>Rattus</taxon>
    </lineage>
</organism>
<keyword id="KW-0256">Endoplasmic reticulum</keyword>
<keyword id="KW-0444">Lipid biosynthesis</keyword>
<keyword id="KW-0551">Lipid droplet</keyword>
<keyword id="KW-0443">Lipid metabolism</keyword>
<keyword id="KW-0521">NADP</keyword>
<keyword id="KW-0560">Oxidoreductase</keyword>
<keyword id="KW-1185">Reference proteome</keyword>
<keyword id="KW-0732">Signal</keyword>
<keyword id="KW-0752">Steroid biosynthesis</keyword>
<feature type="signal peptide" evidence="3">
    <location>
        <begin position="1"/>
        <end position="21"/>
    </location>
</feature>
<feature type="chain" id="PRO_0000031973" description="Estradiol 17-beta-dehydrogenase 11">
    <location>
        <begin position="22"/>
        <end position="298"/>
    </location>
</feature>
<feature type="active site" description="Proton acceptor" evidence="1">
    <location>
        <position position="185"/>
    </location>
</feature>
<feature type="binding site" evidence="1">
    <location>
        <begin position="40"/>
        <end position="64"/>
    </location>
    <ligand>
        <name>NADP(+)</name>
        <dbReference type="ChEBI" id="CHEBI:58349"/>
    </ligand>
</feature>
<feature type="binding site" evidence="1">
    <location>
        <position position="172"/>
    </location>
    <ligand>
        <name>substrate</name>
    </ligand>
</feature>
<comment type="function">
    <text evidence="1">Can convert androstan-3-alpha,17-beta-diol (3-alpha-diol) to androsterone in vitro, suggesting that it may participate in androgen metabolism during steroidogenesis. May act by metabolizing compounds that stimulate steroid synthesis and/or by generating metabolites that inhibit it. Has no activity toward DHEA (dehydroepiandrosterone), or A-dione (4-androste-3,17-dione), and only a slight activity toward testosterone to A-dione.</text>
</comment>
<comment type="catalytic activity">
    <reaction evidence="2">
        <text>17beta-estradiol + NAD(+) = estrone + NADH + H(+)</text>
        <dbReference type="Rhea" id="RHEA:24612"/>
        <dbReference type="ChEBI" id="CHEBI:15378"/>
        <dbReference type="ChEBI" id="CHEBI:16469"/>
        <dbReference type="ChEBI" id="CHEBI:17263"/>
        <dbReference type="ChEBI" id="CHEBI:57540"/>
        <dbReference type="ChEBI" id="CHEBI:57945"/>
        <dbReference type="EC" id="1.1.1.62"/>
    </reaction>
</comment>
<comment type="catalytic activity">
    <reaction evidence="2">
        <text>17beta-estradiol + NADP(+) = estrone + NADPH + H(+)</text>
        <dbReference type="Rhea" id="RHEA:24616"/>
        <dbReference type="ChEBI" id="CHEBI:15378"/>
        <dbReference type="ChEBI" id="CHEBI:16469"/>
        <dbReference type="ChEBI" id="CHEBI:17263"/>
        <dbReference type="ChEBI" id="CHEBI:57783"/>
        <dbReference type="ChEBI" id="CHEBI:58349"/>
        <dbReference type="EC" id="1.1.1.62"/>
    </reaction>
</comment>
<comment type="subcellular location">
    <subcellularLocation>
        <location evidence="2">Endoplasmic reticulum</location>
    </subcellularLocation>
    <subcellularLocation>
        <location evidence="2">Lipid droplet</location>
    </subcellularLocation>
    <text evidence="2">Redistributed from the endoplasmic reticulum to lipids droplets in the cell upon induction of lipids droplet formation.</text>
</comment>
<comment type="similarity">
    <text evidence="4">Belongs to the short-chain dehydrogenases/reductases (SDR) family. 17-beta-HSD 3 subfamily.</text>
</comment>
<dbReference type="EC" id="1.1.1.62" evidence="2"/>
<dbReference type="EMBL" id="BC078929">
    <property type="protein sequence ID" value="AAH78929.1"/>
    <property type="molecule type" value="mRNA"/>
</dbReference>
<dbReference type="RefSeq" id="NP_001004209.1">
    <property type="nucleotide sequence ID" value="NM_001004209.1"/>
</dbReference>
<dbReference type="RefSeq" id="XP_006250689.1">
    <property type="nucleotide sequence ID" value="XM_006250627.5"/>
</dbReference>
<dbReference type="RefSeq" id="XP_006250691.1">
    <property type="nucleotide sequence ID" value="XM_006250629.5"/>
</dbReference>
<dbReference type="RefSeq" id="XP_017454586.1">
    <property type="nucleotide sequence ID" value="XM_017599097.1"/>
</dbReference>
<dbReference type="RefSeq" id="XP_063128963.1">
    <property type="nucleotide sequence ID" value="XM_063272893.1"/>
</dbReference>
<dbReference type="RefSeq" id="XP_063128964.1">
    <property type="nucleotide sequence ID" value="XM_063272894.1"/>
</dbReference>
<dbReference type="SMR" id="Q6AYS8"/>
<dbReference type="FunCoup" id="Q6AYS8">
    <property type="interactions" value="1603"/>
</dbReference>
<dbReference type="STRING" id="10116.ENSRNOP00000003004"/>
<dbReference type="PhosphoSitePlus" id="Q6AYS8"/>
<dbReference type="jPOST" id="Q6AYS8"/>
<dbReference type="PaxDb" id="10116-ENSRNOP00000003004"/>
<dbReference type="Ensembl" id="ENSRNOT00000003004.7">
    <property type="protein sequence ID" value="ENSRNOP00000003004.3"/>
    <property type="gene ID" value="ENSRNOG00000002210.7"/>
</dbReference>
<dbReference type="GeneID" id="289456"/>
<dbReference type="KEGG" id="rno:289456"/>
<dbReference type="AGR" id="RGD:1303235"/>
<dbReference type="CTD" id="51170"/>
<dbReference type="RGD" id="1303235">
    <property type="gene designation" value="Hsd17b11"/>
</dbReference>
<dbReference type="eggNOG" id="KOG1201">
    <property type="taxonomic scope" value="Eukaryota"/>
</dbReference>
<dbReference type="GeneTree" id="ENSGT00940000160856"/>
<dbReference type="HOGENOM" id="CLU_010194_2_5_1"/>
<dbReference type="InParanoid" id="Q6AYS8"/>
<dbReference type="OMA" id="HYWLAQE"/>
<dbReference type="OrthoDB" id="10253736at2759"/>
<dbReference type="PhylomeDB" id="Q6AYS8"/>
<dbReference type="TreeFam" id="TF312837"/>
<dbReference type="Reactome" id="R-RNO-193144">
    <property type="pathway name" value="Estrogen biosynthesis"/>
</dbReference>
<dbReference type="PRO" id="PR:Q6AYS8"/>
<dbReference type="Proteomes" id="UP000002494">
    <property type="component" value="Chromosome 14"/>
</dbReference>
<dbReference type="Bgee" id="ENSRNOG00000002210">
    <property type="expression patterns" value="Expressed in jejunum and 20 other cell types or tissues"/>
</dbReference>
<dbReference type="GO" id="GO:0005737">
    <property type="term" value="C:cytoplasm"/>
    <property type="evidence" value="ECO:0000266"/>
    <property type="project" value="RGD"/>
</dbReference>
<dbReference type="GO" id="GO:0005783">
    <property type="term" value="C:endoplasmic reticulum"/>
    <property type="evidence" value="ECO:0007669"/>
    <property type="project" value="UniProtKB-SubCell"/>
</dbReference>
<dbReference type="GO" id="GO:0005811">
    <property type="term" value="C:lipid droplet"/>
    <property type="evidence" value="ECO:0000318"/>
    <property type="project" value="GO_Central"/>
</dbReference>
<dbReference type="GO" id="GO:0004303">
    <property type="term" value="F:estradiol 17-beta-dehydrogenase [NAD(P)+] activity"/>
    <property type="evidence" value="ECO:0000266"/>
    <property type="project" value="RGD"/>
</dbReference>
<dbReference type="GO" id="GO:0016616">
    <property type="term" value="F:oxidoreductase activity, acting on the CH-OH group of donors, NAD or NADP as acceptor"/>
    <property type="evidence" value="ECO:0000318"/>
    <property type="project" value="GO_Central"/>
</dbReference>
<dbReference type="GO" id="GO:0016229">
    <property type="term" value="F:steroid dehydrogenase activity"/>
    <property type="evidence" value="ECO:0000266"/>
    <property type="project" value="RGD"/>
</dbReference>
<dbReference type="GO" id="GO:0006710">
    <property type="term" value="P:androgen catabolic process"/>
    <property type="evidence" value="ECO:0000266"/>
    <property type="project" value="RGD"/>
</dbReference>
<dbReference type="GO" id="GO:0006694">
    <property type="term" value="P:steroid biosynthetic process"/>
    <property type="evidence" value="ECO:0007669"/>
    <property type="project" value="UniProtKB-KW"/>
</dbReference>
<dbReference type="CDD" id="cd05339">
    <property type="entry name" value="17beta-HSDXI-like_SDR_c"/>
    <property type="match status" value="1"/>
</dbReference>
<dbReference type="FunFam" id="3.40.50.720:FF:000224">
    <property type="entry name" value="Hydroxysteroid 17-beta dehydrogenase 11"/>
    <property type="match status" value="1"/>
</dbReference>
<dbReference type="Gene3D" id="3.40.50.720">
    <property type="entry name" value="NAD(P)-binding Rossmann-like Domain"/>
    <property type="match status" value="1"/>
</dbReference>
<dbReference type="InterPro" id="IPR036291">
    <property type="entry name" value="NAD(P)-bd_dom_sf"/>
</dbReference>
<dbReference type="InterPro" id="IPR002347">
    <property type="entry name" value="SDR_fam"/>
</dbReference>
<dbReference type="PANTHER" id="PTHR24322:SF489">
    <property type="entry name" value="ESTRADIOL 17-BETA-DEHYDROGENASE 11"/>
    <property type="match status" value="1"/>
</dbReference>
<dbReference type="PANTHER" id="PTHR24322">
    <property type="entry name" value="PKSB"/>
    <property type="match status" value="1"/>
</dbReference>
<dbReference type="Pfam" id="PF00106">
    <property type="entry name" value="adh_short"/>
    <property type="match status" value="1"/>
</dbReference>
<dbReference type="PRINTS" id="PR00081">
    <property type="entry name" value="GDHRDH"/>
</dbReference>
<dbReference type="PRINTS" id="PR00080">
    <property type="entry name" value="SDRFAMILY"/>
</dbReference>
<dbReference type="SUPFAM" id="SSF51735">
    <property type="entry name" value="NAD(P)-binding Rossmann-fold domains"/>
    <property type="match status" value="1"/>
</dbReference>
<sequence length="298" mass="32938">MKYLLDLILLLPLLIVFCIESFIKRLIPKKKKSVAGEIVLITGAGHGIGRLTAYEFAKLNTKLVLWDINKNGIEETAAKCRKLGAQVHPFVVDCSQREEIYSAVRKVKEEVGDVSILVNNAGVVYTADLFATQDPQIEKTFEVNVLAHFWTTKAFLPAMMKNNHGHVVTVASAAGHTVVPFLLAYCSSKFAAVGFHRALTDELAALGCTGVRTSCLCPNFINTGFIKNPSTNLGPTLEPEEVVEHLMHGILTNQKMIFVPGSIALLTVLERVFPERFLDVLKRRINVKFDAVVGYKDK</sequence>
<gene>
    <name type="primary">Hsd17b11</name>
    <name type="synonym">Dhrs8</name>
</gene>
<reference key="1">
    <citation type="journal article" date="2004" name="Genome Res.">
        <title>The status, quality, and expansion of the NIH full-length cDNA project: the Mammalian Gene Collection (MGC).</title>
        <authorList>
            <consortium name="The MGC Project Team"/>
        </authorList>
    </citation>
    <scope>NUCLEOTIDE SEQUENCE [LARGE SCALE MRNA]</scope>
    <source>
        <tissue>Kidney</tissue>
    </source>
</reference>
<protein>
    <recommendedName>
        <fullName>Estradiol 17-beta-dehydrogenase 11</fullName>
        <ecNumber evidence="2">1.1.1.62</ecNumber>
    </recommendedName>
    <alternativeName>
        <fullName>17-beta-hydroxysteroid dehydrogenase 11</fullName>
        <shortName>17-beta-HSD 11</shortName>
        <shortName>17bHSD11</shortName>
        <shortName>17betaHSD11</shortName>
    </alternativeName>
    <alternativeName>
        <fullName>17-beta-hydroxysteroid dehydrogenase XI</fullName>
        <shortName>17-beta-HSD XI</shortName>
        <shortName>17betaHSDXI</shortName>
    </alternativeName>
    <alternativeName>
        <fullName>Dehydrogenase/reductase SDR family member 8</fullName>
    </alternativeName>
</protein>
<proteinExistence type="evidence at transcript level"/>
<accession>Q6AYS8</accession>
<name>DHB11_RAT</name>